<proteinExistence type="evidence at protein level"/>
<dbReference type="EC" id="4.3.1.24" evidence="5"/>
<dbReference type="EMBL" id="AY705976">
    <property type="protein sequence ID" value="AAV98199.1"/>
    <property type="molecule type" value="mRNA"/>
</dbReference>
<dbReference type="SMR" id="Q50EX7"/>
<dbReference type="UniPathway" id="UPA00713">
    <property type="reaction ID" value="UER00725"/>
</dbReference>
<dbReference type="GO" id="GO:0005737">
    <property type="term" value="C:cytoplasm"/>
    <property type="evidence" value="ECO:0007669"/>
    <property type="project" value="UniProtKB-SubCell"/>
</dbReference>
<dbReference type="GO" id="GO:0045548">
    <property type="term" value="F:phenylalanine ammonia-lyase activity"/>
    <property type="evidence" value="ECO:0007669"/>
    <property type="project" value="UniProtKB-EC"/>
</dbReference>
<dbReference type="GO" id="GO:0009800">
    <property type="term" value="P:cinnamic acid biosynthetic process"/>
    <property type="evidence" value="ECO:0007669"/>
    <property type="project" value="UniProtKB-UniPathway"/>
</dbReference>
<dbReference type="GO" id="GO:0007623">
    <property type="term" value="P:circadian rhythm"/>
    <property type="evidence" value="ECO:0000270"/>
    <property type="project" value="UniProtKB"/>
</dbReference>
<dbReference type="GO" id="GO:0006559">
    <property type="term" value="P:L-phenylalanine catabolic process"/>
    <property type="evidence" value="ECO:0007669"/>
    <property type="project" value="UniProtKB-KW"/>
</dbReference>
<dbReference type="CDD" id="cd00332">
    <property type="entry name" value="PAL-HAL"/>
    <property type="match status" value="1"/>
</dbReference>
<dbReference type="FunFam" id="1.10.274.20:FF:000001">
    <property type="entry name" value="Phenylalanine ammonia-lyase"/>
    <property type="match status" value="1"/>
</dbReference>
<dbReference type="FunFam" id="1.10.275.10:FF:000009">
    <property type="entry name" value="Phenylalanine ammonia-lyase"/>
    <property type="match status" value="1"/>
</dbReference>
<dbReference type="FunFam" id="1.20.200.10:FF:000009">
    <property type="entry name" value="Phenylalanine ammonia-lyase"/>
    <property type="match status" value="1"/>
</dbReference>
<dbReference type="Gene3D" id="1.20.200.10">
    <property type="entry name" value="Fumarase/aspartase (Central domain)"/>
    <property type="match status" value="1"/>
</dbReference>
<dbReference type="Gene3D" id="1.10.275.10">
    <property type="entry name" value="Fumarase/aspartase (N-terminal domain)"/>
    <property type="match status" value="1"/>
</dbReference>
<dbReference type="Gene3D" id="1.10.274.20">
    <property type="entry name" value="Phenylalanine ammonia-lyase 1, domain 3"/>
    <property type="match status" value="1"/>
</dbReference>
<dbReference type="InterPro" id="IPR001106">
    <property type="entry name" value="Aromatic_Lyase"/>
</dbReference>
<dbReference type="InterPro" id="IPR024083">
    <property type="entry name" value="Fumarase/histidase_N"/>
</dbReference>
<dbReference type="InterPro" id="IPR008948">
    <property type="entry name" value="L-Aspartase-like"/>
</dbReference>
<dbReference type="InterPro" id="IPR022313">
    <property type="entry name" value="Phe/His_NH3-lyase_AS"/>
</dbReference>
<dbReference type="InterPro" id="IPR005922">
    <property type="entry name" value="Phe_NH3-lyase"/>
</dbReference>
<dbReference type="InterPro" id="IPR023144">
    <property type="entry name" value="Phe_NH3-lyase_shielding_dom_sf"/>
</dbReference>
<dbReference type="NCBIfam" id="TIGR01226">
    <property type="entry name" value="phe_am_lyase"/>
    <property type="match status" value="1"/>
</dbReference>
<dbReference type="PANTHER" id="PTHR10362">
    <property type="entry name" value="HISTIDINE AMMONIA-LYASE"/>
    <property type="match status" value="1"/>
</dbReference>
<dbReference type="Pfam" id="PF00221">
    <property type="entry name" value="Lyase_aromatic"/>
    <property type="match status" value="1"/>
</dbReference>
<dbReference type="SUPFAM" id="SSF48557">
    <property type="entry name" value="L-aspartase-like"/>
    <property type="match status" value="1"/>
</dbReference>
<dbReference type="PROSITE" id="PS00488">
    <property type="entry name" value="PAL_HISTIDASE"/>
    <property type="match status" value="1"/>
</dbReference>
<organism>
    <name type="scientific">Petunia hybrida</name>
    <name type="common">Petunia</name>
    <dbReference type="NCBI Taxonomy" id="4102"/>
    <lineage>
        <taxon>Eukaryota</taxon>
        <taxon>Viridiplantae</taxon>
        <taxon>Streptophyta</taxon>
        <taxon>Embryophyta</taxon>
        <taxon>Tracheophyta</taxon>
        <taxon>Spermatophyta</taxon>
        <taxon>Magnoliopsida</taxon>
        <taxon>eudicotyledons</taxon>
        <taxon>Gunneridae</taxon>
        <taxon>Pentapetalae</taxon>
        <taxon>asterids</taxon>
        <taxon>lamiids</taxon>
        <taxon>Solanales</taxon>
        <taxon>Solanaceae</taxon>
        <taxon>Petunioideae</taxon>
        <taxon>Petunia</taxon>
    </lineage>
</organism>
<feature type="chain" id="PRO_0000451488" description="Phenylalanine ammonia-lyase 1">
    <location>
        <begin position="1"/>
        <end position="718"/>
    </location>
</feature>
<feature type="active site" description="Proton donor/acceptor" evidence="3">
    <location>
        <position position="110"/>
    </location>
</feature>
<feature type="binding site" evidence="3">
    <location>
        <position position="262"/>
    </location>
    <ligand>
        <name>(E)-cinnamate</name>
        <dbReference type="ChEBI" id="CHEBI:15669"/>
    </ligand>
</feature>
<feature type="binding site" evidence="3">
    <location>
        <position position="350"/>
    </location>
    <ligand>
        <name>(E)-cinnamate</name>
        <dbReference type="ChEBI" id="CHEBI:15669"/>
    </ligand>
</feature>
<feature type="binding site" evidence="3">
    <location>
        <position position="356"/>
    </location>
    <ligand>
        <name>(E)-cinnamate</name>
        <dbReference type="ChEBI" id="CHEBI:15669"/>
    </ligand>
</feature>
<feature type="binding site" evidence="3">
    <location>
        <position position="386"/>
    </location>
    <ligand>
        <name>(E)-cinnamate</name>
        <dbReference type="ChEBI" id="CHEBI:15669"/>
    </ligand>
</feature>
<feature type="binding site" evidence="1">
    <location>
        <position position="458"/>
    </location>
    <ligand>
        <name>(E)-cinnamate</name>
        <dbReference type="ChEBI" id="CHEBI:15669"/>
    </ligand>
</feature>
<feature type="binding site" evidence="1">
    <location>
        <position position="486"/>
    </location>
    <ligand>
        <name>(E)-cinnamate</name>
        <dbReference type="ChEBI" id="CHEBI:15669"/>
    </ligand>
</feature>
<feature type="binding site" evidence="3">
    <location>
        <position position="489"/>
    </location>
    <ligand>
        <name>(E)-cinnamate</name>
        <dbReference type="ChEBI" id="CHEBI:15669"/>
    </ligand>
</feature>
<feature type="modified residue" description="2,3-didehydroalanine (Ser)" evidence="3">
    <location>
        <position position="205"/>
    </location>
</feature>
<feature type="cross-link" description="5-imidazolinone (Ala-Gly)" evidence="3">
    <location>
        <begin position="204"/>
        <end position="206"/>
    </location>
</feature>
<sequence length="718" mass="78601">MEYANENCNGHASQDICVKGHDQQLDPLNWNMAADALKGSHLDEVKRMVKEFRKPVVRLGGETLTVAQVAAIASQSGTDVTVQLSEASRAGVKASSDWVLQGMINGTDSYGVTTGFGATSHRRTKEGAALQKELIRFLNAGIFGNGTESSHTLPHSATRAAMLVRINTLLQGYSGIRFEILEAITKLLNNNITPCLPLRGTITASGDLVPLSYIAGLLTGRPNSKATGPNGELLDAVKAFQRAGIDTGFFELQPKEGLALVNGTAVGSGLASMVLFDANILAVLSEVLSAIFAEVMQGKPEFTDYLTHKLKHHPGQIEAAAIMEHILDGSSYVKEAKIVHEMDPLQKPKQDRYALRTSPQWLGPQIEVIRAATKMIEREINSVNDNPLIDVSRNKALHGGNFQGTPIGVSMDNTRLALASIGKLMFAQFSELVNDYYNNGLPSNLTGGRNPSLDYGFKGAEIAMASYCSELQFLANPVTNHVQSAEQHNQDVNSLGLISSRKTAEAVDILKLMSSTYLVALCQAIDLRHLEENLKATVKNSVSLVAKKVLTIGEKGELHHSRFCEKDMLKVVDREYIFAYADDACSATYPLMQKLRQVLVDRALLNVDGEKDSSTSIFQKIKAFEEELKVVLPKEIERARSDLEQGKPAIPNRIQECRSYPLYKFVREELKANYLTGEKVQSPGEEFDKVFTAMNEGKLVDPLLNCLKEWNGAPLPLC</sequence>
<evidence type="ECO:0000250" key="1">
    <source>
        <dbReference type="UniProtKB" id="P11544"/>
    </source>
</evidence>
<evidence type="ECO:0000250" key="2">
    <source>
        <dbReference type="UniProtKB" id="P24481"/>
    </source>
</evidence>
<evidence type="ECO:0000250" key="3">
    <source>
        <dbReference type="UniProtKB" id="Q68G84"/>
    </source>
</evidence>
<evidence type="ECO:0000269" key="4">
    <source>
    </source>
</evidence>
<evidence type="ECO:0000269" key="5">
    <source>
    </source>
</evidence>
<evidence type="ECO:0000269" key="6">
    <source>
    </source>
</evidence>
<evidence type="ECO:0000269" key="7">
    <source>
    </source>
</evidence>
<evidence type="ECO:0000303" key="8">
    <source>
    </source>
</evidence>
<evidence type="ECO:0000305" key="9"/>
<keyword id="KW-0963">Cytoplasm</keyword>
<keyword id="KW-0456">Lyase</keyword>
<keyword id="KW-0585">Phenylalanine catabolism</keyword>
<keyword id="KW-0587">Phenylpropanoid metabolism</keyword>
<comment type="function">
    <text evidence="2">This is a key enzyme of plant metabolism catalyzing the first reaction in the biosynthesis from L-phenylalanine of a wide variety of natural products based on the phenylpropane skeleton.</text>
</comment>
<comment type="catalytic activity">
    <reaction evidence="5">
        <text>L-phenylalanine = (E)-cinnamate + NH4(+)</text>
        <dbReference type="Rhea" id="RHEA:21384"/>
        <dbReference type="ChEBI" id="CHEBI:15669"/>
        <dbReference type="ChEBI" id="CHEBI:28938"/>
        <dbReference type="ChEBI" id="CHEBI:58095"/>
        <dbReference type="EC" id="4.3.1.24"/>
    </reaction>
    <physiologicalReaction direction="left-to-right" evidence="5">
        <dbReference type="Rhea" id="RHEA:21385"/>
    </physiologicalReaction>
</comment>
<comment type="activity regulation">
    <text evidence="5">Competitive inhibition by cinnamic acid (CA).</text>
</comment>
<comment type="biophysicochemical properties">
    <kinetics>
        <KM evidence="5">160 uM for L-phenylalanine</KM>
    </kinetics>
</comment>
<comment type="pathway">
    <text evidence="2">Phenylpropanoid metabolism; trans-cinnamate biosynthesis; trans-cinnamate from L-phenylalanine: step 1/1.</text>
</comment>
<comment type="subunit">
    <text evidence="2">Homotetramer.</text>
</comment>
<comment type="subcellular location">
    <subcellularLocation>
        <location evidence="2">Cytoplasm</location>
    </subcellularLocation>
</comment>
<comment type="induction">
    <text evidence="4 6 7">Circadian-regulation with peak levels occurring at the end of the light period in flowers (PubMed:12590126, PubMed:26124104). Triggered by EOBI in flowers via the regulation of its promoter (PubMed:23275577).</text>
</comment>
<comment type="PTM">
    <text evidence="3">Contains an active site 4-methylidene-imidazol-5-one (MIO), which is formed autocatalytically by cyclization and dehydration of residues Ala-Ser-Gly.</text>
</comment>
<comment type="similarity">
    <text evidence="9">Belongs to the PAL/histidase family.</text>
</comment>
<protein>
    <recommendedName>
        <fullName evidence="8">Phenylalanine ammonia-lyase 1</fullName>
        <shortName evidence="8">PhPAL1</shortName>
        <ecNumber evidence="5">4.3.1.24</ecNumber>
    </recommendedName>
</protein>
<name>PAL1_PETHY</name>
<reference key="1">
    <citation type="journal article" date="2005" name="Plant Cell">
        <title>ODORANT1 regulates fragrance biosynthesis in petunia flowers.</title>
        <authorList>
            <person name="Verdonk J.C."/>
            <person name="Haring M.A."/>
            <person name="van Tunen A.J."/>
            <person name="Schuurink R.C."/>
        </authorList>
    </citation>
    <scope>NUCLEOTIDE SEQUENCE [MRNA]</scope>
    <source>
        <strain>cv. Mitchell</strain>
    </source>
</reference>
<reference key="2">
    <citation type="journal article" date="2003" name="Phytochemistry">
        <title>Regulation of floral scent production in petunia revealed by targeted metabolomics.</title>
        <authorList>
            <person name="Verdonk J.C."/>
            <person name="Ric de Vos C.H."/>
            <person name="Verhoeven H.A."/>
            <person name="Haring M.A."/>
            <person name="van Tunen A.J."/>
            <person name="Schuurink R.C."/>
        </authorList>
    </citation>
    <scope>INDUCTION</scope>
    <source>
        <strain>cv. W115</strain>
    </source>
</reference>
<reference key="3">
    <citation type="journal article" date="2010" name="Plant J.">
        <title>A kinetic model describes metabolic response to perturbations and distribution of flux control in the benzenoid network of Petunia hybrida.</title>
        <authorList>
            <person name="Colon A.M."/>
            <person name="Sengupta N."/>
            <person name="Rhodes D."/>
            <person name="Dudareva N."/>
            <person name="Morgan J."/>
        </authorList>
    </citation>
    <scope>CATALYTIC ACTIVITY</scope>
    <scope>BIOPHYSICOCHEMICAL PROPERTIES</scope>
    <scope>ACTIVITY REGULATION</scope>
</reference>
<reference key="4">
    <citation type="journal article" date="2012" name="Plant Cell">
        <title>The R2R3-MYB-like regulatory factor EOBI, acting downstream of EOBII, regulates scent production by activating ODO1 and structural scent-related genes in petunia.</title>
        <authorList>
            <person name="Spitzer-Rimon B."/>
            <person name="Farhi M."/>
            <person name="Albo B."/>
            <person name="Cna'ani A."/>
            <person name="Ben Zvi M.M."/>
            <person name="Masci T."/>
            <person name="Edelbaum O."/>
            <person name="Yu Y."/>
            <person name="Shklarman E."/>
            <person name="Ovadis M."/>
            <person name="Vainstein A."/>
        </authorList>
    </citation>
    <scope>INDUCTION BY EOBI</scope>
    <source>
        <strain>cv. W115</strain>
    </source>
</reference>
<reference key="5">
    <citation type="journal article" date="2015" name="Proc. Natl. Acad. Sci. U.S.A.">
        <title>Circadian clock gene LATE ELONGATED HYPOCOTYL directly regulates the timing of floral scent emission in Petunia.</title>
        <authorList>
            <person name="Fenske M.P."/>
            <person name="Hewett Hazelton K.D."/>
            <person name="Hempton A.K."/>
            <person name="Shim J.S."/>
            <person name="Yamamoto B.M."/>
            <person name="Riffell J.A."/>
            <person name="Imaizumi T."/>
        </authorList>
    </citation>
    <scope>INDUCTION</scope>
</reference>
<gene>
    <name evidence="8" type="primary">PAL1</name>
</gene>
<accession>Q50EX7</accession>